<proteinExistence type="inferred from homology"/>
<name>ENGB_RICPU</name>
<comment type="function">
    <text evidence="1">Necessary for normal cell division and for the maintenance of normal septation.</text>
</comment>
<comment type="cofactor">
    <cofactor evidence="1">
        <name>Mg(2+)</name>
        <dbReference type="ChEBI" id="CHEBI:18420"/>
    </cofactor>
</comment>
<comment type="similarity">
    <text evidence="1">Belongs to the TRAFAC class TrmE-Era-EngA-EngB-Septin-like GTPase superfamily. EngB GTPase family.</text>
</comment>
<organism>
    <name type="scientific">Rickettsia peacockii (strain Rustic)</name>
    <dbReference type="NCBI Taxonomy" id="562019"/>
    <lineage>
        <taxon>Bacteria</taxon>
        <taxon>Pseudomonadati</taxon>
        <taxon>Pseudomonadota</taxon>
        <taxon>Alphaproteobacteria</taxon>
        <taxon>Rickettsiales</taxon>
        <taxon>Rickettsiaceae</taxon>
        <taxon>Rickettsieae</taxon>
        <taxon>Rickettsia</taxon>
        <taxon>spotted fever group</taxon>
    </lineage>
</organism>
<feature type="chain" id="PRO_1000205137" description="Probable GTP-binding protein EngB">
    <location>
        <begin position="1"/>
        <end position="212"/>
    </location>
</feature>
<feature type="domain" description="EngB-type G" evidence="1">
    <location>
        <begin position="38"/>
        <end position="210"/>
    </location>
</feature>
<feature type="binding site" evidence="1">
    <location>
        <begin position="46"/>
        <end position="53"/>
    </location>
    <ligand>
        <name>GTP</name>
        <dbReference type="ChEBI" id="CHEBI:37565"/>
    </ligand>
</feature>
<feature type="binding site" evidence="1">
    <location>
        <position position="53"/>
    </location>
    <ligand>
        <name>Mg(2+)</name>
        <dbReference type="ChEBI" id="CHEBI:18420"/>
    </ligand>
</feature>
<feature type="binding site" evidence="1">
    <location>
        <begin position="73"/>
        <end position="77"/>
    </location>
    <ligand>
        <name>GTP</name>
        <dbReference type="ChEBI" id="CHEBI:37565"/>
    </ligand>
</feature>
<feature type="binding site" evidence="1">
    <location>
        <position position="75"/>
    </location>
    <ligand>
        <name>Mg(2+)</name>
        <dbReference type="ChEBI" id="CHEBI:18420"/>
    </ligand>
</feature>
<feature type="binding site" evidence="1">
    <location>
        <begin position="91"/>
        <end position="94"/>
    </location>
    <ligand>
        <name>GTP</name>
        <dbReference type="ChEBI" id="CHEBI:37565"/>
    </ligand>
</feature>
<feature type="binding site" evidence="1">
    <location>
        <begin position="158"/>
        <end position="161"/>
    </location>
    <ligand>
        <name>GTP</name>
        <dbReference type="ChEBI" id="CHEBI:37565"/>
    </ligand>
</feature>
<feature type="binding site" evidence="1">
    <location>
        <begin position="189"/>
        <end position="191"/>
    </location>
    <ligand>
        <name>GTP</name>
        <dbReference type="ChEBI" id="CHEBI:37565"/>
    </ligand>
</feature>
<sequence>MTTQKIVPTKSTDGSKLFRHQAKFVAGAMNINQIPNFSLPEIAFVGKSNVGKSSLINTICNNKNLAKVSNTAGRTRQINFFNLADKLIIVDLPGYGFANVPISVKEQWGVLISYYLRNSYNLRLVNLLIDSRRGIKENDKKVADLLLANKREFQIIFTKSDKVTDHKNLHDEAHNFLATLNYSCNVMYVSNRSKEGARELKASLAKCIKPQK</sequence>
<evidence type="ECO:0000255" key="1">
    <source>
        <dbReference type="HAMAP-Rule" id="MF_00321"/>
    </source>
</evidence>
<reference key="1">
    <citation type="journal article" date="2009" name="PLoS ONE">
        <title>Genome sequence of the endosymbiont Rickettsia peacockii and comparison with virulent Rickettsia rickettsii: identification of virulence factors.</title>
        <authorList>
            <person name="Felsheim R.F."/>
            <person name="Kurtti T.J."/>
            <person name="Munderloh U.G."/>
        </authorList>
    </citation>
    <scope>NUCLEOTIDE SEQUENCE [LARGE SCALE GENOMIC DNA]</scope>
    <source>
        <strain>Rustic</strain>
    </source>
</reference>
<protein>
    <recommendedName>
        <fullName evidence="1">Probable GTP-binding protein EngB</fullName>
    </recommendedName>
</protein>
<gene>
    <name evidence="1" type="primary">engB</name>
    <name type="ordered locus">RPR_02810</name>
</gene>
<keyword id="KW-0131">Cell cycle</keyword>
<keyword id="KW-0132">Cell division</keyword>
<keyword id="KW-0342">GTP-binding</keyword>
<keyword id="KW-0460">Magnesium</keyword>
<keyword id="KW-0479">Metal-binding</keyword>
<keyword id="KW-0547">Nucleotide-binding</keyword>
<keyword id="KW-0717">Septation</keyword>
<accession>C4K1B9</accession>
<dbReference type="EMBL" id="CP001227">
    <property type="protein sequence ID" value="ACR47370.1"/>
    <property type="molecule type" value="Genomic_DNA"/>
</dbReference>
<dbReference type="RefSeq" id="WP_012736625.1">
    <property type="nucleotide sequence ID" value="NC_012730.1"/>
</dbReference>
<dbReference type="SMR" id="C4K1B9"/>
<dbReference type="KEGG" id="rpk:RPR_02810"/>
<dbReference type="HOGENOM" id="CLU_033732_2_0_5"/>
<dbReference type="Proteomes" id="UP000005015">
    <property type="component" value="Chromosome"/>
</dbReference>
<dbReference type="GO" id="GO:0005525">
    <property type="term" value="F:GTP binding"/>
    <property type="evidence" value="ECO:0007669"/>
    <property type="project" value="UniProtKB-UniRule"/>
</dbReference>
<dbReference type="GO" id="GO:0046872">
    <property type="term" value="F:metal ion binding"/>
    <property type="evidence" value="ECO:0007669"/>
    <property type="project" value="UniProtKB-KW"/>
</dbReference>
<dbReference type="GO" id="GO:0000917">
    <property type="term" value="P:division septum assembly"/>
    <property type="evidence" value="ECO:0007669"/>
    <property type="project" value="UniProtKB-KW"/>
</dbReference>
<dbReference type="CDD" id="cd01876">
    <property type="entry name" value="YihA_EngB"/>
    <property type="match status" value="1"/>
</dbReference>
<dbReference type="Gene3D" id="3.40.50.300">
    <property type="entry name" value="P-loop containing nucleotide triphosphate hydrolases"/>
    <property type="match status" value="1"/>
</dbReference>
<dbReference type="HAMAP" id="MF_00321">
    <property type="entry name" value="GTPase_EngB"/>
    <property type="match status" value="1"/>
</dbReference>
<dbReference type="InterPro" id="IPR030393">
    <property type="entry name" value="G_ENGB_dom"/>
</dbReference>
<dbReference type="InterPro" id="IPR006073">
    <property type="entry name" value="GTP-bd"/>
</dbReference>
<dbReference type="InterPro" id="IPR019987">
    <property type="entry name" value="GTP-bd_ribosome_bio_YsxC"/>
</dbReference>
<dbReference type="InterPro" id="IPR027417">
    <property type="entry name" value="P-loop_NTPase"/>
</dbReference>
<dbReference type="NCBIfam" id="TIGR03598">
    <property type="entry name" value="GTPase_YsxC"/>
    <property type="match status" value="1"/>
</dbReference>
<dbReference type="PANTHER" id="PTHR11649:SF13">
    <property type="entry name" value="ENGB-TYPE G DOMAIN-CONTAINING PROTEIN"/>
    <property type="match status" value="1"/>
</dbReference>
<dbReference type="PANTHER" id="PTHR11649">
    <property type="entry name" value="MSS1/TRME-RELATED GTP-BINDING PROTEIN"/>
    <property type="match status" value="1"/>
</dbReference>
<dbReference type="Pfam" id="PF01926">
    <property type="entry name" value="MMR_HSR1"/>
    <property type="match status" value="1"/>
</dbReference>
<dbReference type="SUPFAM" id="SSF52540">
    <property type="entry name" value="P-loop containing nucleoside triphosphate hydrolases"/>
    <property type="match status" value="1"/>
</dbReference>
<dbReference type="PROSITE" id="PS51706">
    <property type="entry name" value="G_ENGB"/>
    <property type="match status" value="1"/>
</dbReference>